<evidence type="ECO:0000250" key="1"/>
<evidence type="ECO:0000255" key="2">
    <source>
        <dbReference type="PROSITE-ProRule" id="PRU00441"/>
    </source>
</evidence>
<evidence type="ECO:0000305" key="3"/>
<protein>
    <recommendedName>
        <fullName>Putative glutamine transport system permease protein GlnP</fullName>
    </recommendedName>
</protein>
<name>GLNP_RICFE</name>
<comment type="function">
    <text evidence="1">Part of the binding-protein-dependent transport system for glutamine; probably responsible for the translocation of the substrate across the membrane.</text>
</comment>
<comment type="subcellular location">
    <subcellularLocation>
        <location>Cell inner membrane</location>
        <topology>Multi-pass membrane protein</topology>
    </subcellularLocation>
</comment>
<comment type="similarity">
    <text evidence="3">Belongs to the binding-protein-dependent transport system permease family. HisMQ subfamily.</text>
</comment>
<keyword id="KW-0029">Amino-acid transport</keyword>
<keyword id="KW-0997">Cell inner membrane</keyword>
<keyword id="KW-1003">Cell membrane</keyword>
<keyword id="KW-0472">Membrane</keyword>
<keyword id="KW-0812">Transmembrane</keyword>
<keyword id="KW-1133">Transmembrane helix</keyword>
<keyword id="KW-0813">Transport</keyword>
<sequence length="218" mass="24480">MFEYLIKFYPKILFIVEGTLVTLKYSVIAVIFGLVIGMLLAICKVNKNRALRLFANFYTSIFRGTPLLIQLSIIYFASPYIIGVKFSVFMAGAISFSLNSGAYVSEVIRAGINAVDKGQFEAAVALAIPKFLIMKDIILPQAVKNIFPSLVNELVNLVKESAIISMLGEMDLMRRAQIVSIETYNYFFPMFIAACCYYILVMLISFIAKIIEKKMIVN</sequence>
<organism>
    <name type="scientific">Rickettsia felis (strain ATCC VR-1525 / URRWXCal2)</name>
    <name type="common">Rickettsia azadi</name>
    <dbReference type="NCBI Taxonomy" id="315456"/>
    <lineage>
        <taxon>Bacteria</taxon>
        <taxon>Pseudomonadati</taxon>
        <taxon>Pseudomonadota</taxon>
        <taxon>Alphaproteobacteria</taxon>
        <taxon>Rickettsiales</taxon>
        <taxon>Rickettsiaceae</taxon>
        <taxon>Rickettsieae</taxon>
        <taxon>Rickettsia</taxon>
        <taxon>spotted fever group</taxon>
    </lineage>
</organism>
<reference key="1">
    <citation type="journal article" date="2005" name="PLoS Biol.">
        <title>The genome sequence of Rickettsia felis identifies the first putative conjugative plasmid in an obligate intracellular parasite.</title>
        <authorList>
            <person name="Ogata H."/>
            <person name="Renesto P."/>
            <person name="Audic S."/>
            <person name="Robert C."/>
            <person name="Blanc G."/>
            <person name="Fournier P.-E."/>
            <person name="Parinello H."/>
            <person name="Claverie J.-M."/>
            <person name="Raoult D."/>
        </authorList>
    </citation>
    <scope>NUCLEOTIDE SEQUENCE [LARGE SCALE GENOMIC DNA]</scope>
    <source>
        <strain>ATCC VR-1525 / URRWXCal2</strain>
    </source>
</reference>
<feature type="chain" id="PRO_0000286464" description="Putative glutamine transport system permease protein GlnP">
    <location>
        <begin position="1"/>
        <end position="218"/>
    </location>
</feature>
<feature type="transmembrane region" description="Helical" evidence="2">
    <location>
        <begin position="25"/>
        <end position="45"/>
    </location>
</feature>
<feature type="transmembrane region" description="Helical" evidence="2">
    <location>
        <begin position="57"/>
        <end position="79"/>
    </location>
</feature>
<feature type="transmembrane region" description="Helical" evidence="2">
    <location>
        <begin position="86"/>
        <end position="108"/>
    </location>
</feature>
<feature type="transmembrane region" description="Helical" evidence="2">
    <location>
        <begin position="187"/>
        <end position="207"/>
    </location>
</feature>
<feature type="domain" description="ABC transmembrane type-1" evidence="2">
    <location>
        <begin position="19"/>
        <end position="208"/>
    </location>
</feature>
<gene>
    <name type="primary">glnP</name>
    <name type="ordered locus">RF_1156</name>
</gene>
<proteinExistence type="inferred from homology"/>
<dbReference type="EMBL" id="CP000053">
    <property type="protein sequence ID" value="AAY62007.1"/>
    <property type="molecule type" value="Genomic_DNA"/>
</dbReference>
<dbReference type="SMR" id="Q4UKC4"/>
<dbReference type="STRING" id="315456.RF_1156"/>
<dbReference type="KEGG" id="rfe:RF_1156"/>
<dbReference type="eggNOG" id="COG0765">
    <property type="taxonomic scope" value="Bacteria"/>
</dbReference>
<dbReference type="HOGENOM" id="CLU_019602_1_1_5"/>
<dbReference type="OrthoDB" id="7190458at2"/>
<dbReference type="Proteomes" id="UP000008548">
    <property type="component" value="Chromosome"/>
</dbReference>
<dbReference type="GO" id="GO:0043190">
    <property type="term" value="C:ATP-binding cassette (ABC) transporter complex"/>
    <property type="evidence" value="ECO:0007669"/>
    <property type="project" value="InterPro"/>
</dbReference>
<dbReference type="GO" id="GO:0022857">
    <property type="term" value="F:transmembrane transporter activity"/>
    <property type="evidence" value="ECO:0007669"/>
    <property type="project" value="InterPro"/>
</dbReference>
<dbReference type="GO" id="GO:0006865">
    <property type="term" value="P:amino acid transport"/>
    <property type="evidence" value="ECO:0007669"/>
    <property type="project" value="UniProtKB-KW"/>
</dbReference>
<dbReference type="CDD" id="cd06261">
    <property type="entry name" value="TM_PBP2"/>
    <property type="match status" value="1"/>
</dbReference>
<dbReference type="FunFam" id="1.10.3720.10:FF:000033">
    <property type="entry name" value="Polar amino acid ABC transporter permease"/>
    <property type="match status" value="1"/>
</dbReference>
<dbReference type="Gene3D" id="1.10.3720.10">
    <property type="entry name" value="MetI-like"/>
    <property type="match status" value="1"/>
</dbReference>
<dbReference type="InterPro" id="IPR010065">
    <property type="entry name" value="AA_ABC_transptr_permease_3TM"/>
</dbReference>
<dbReference type="InterPro" id="IPR043429">
    <property type="entry name" value="ArtM/GltK/GlnP/TcyL/YhdX-like"/>
</dbReference>
<dbReference type="InterPro" id="IPR000515">
    <property type="entry name" value="MetI-like"/>
</dbReference>
<dbReference type="InterPro" id="IPR035906">
    <property type="entry name" value="MetI-like_sf"/>
</dbReference>
<dbReference type="NCBIfam" id="TIGR01726">
    <property type="entry name" value="HEQRo_perm_3TM"/>
    <property type="match status" value="1"/>
</dbReference>
<dbReference type="PANTHER" id="PTHR30614:SF20">
    <property type="entry name" value="GLUTAMINE TRANSPORT SYSTEM PERMEASE PROTEIN GLNP"/>
    <property type="match status" value="1"/>
</dbReference>
<dbReference type="PANTHER" id="PTHR30614">
    <property type="entry name" value="MEMBRANE COMPONENT OF AMINO ACID ABC TRANSPORTER"/>
    <property type="match status" value="1"/>
</dbReference>
<dbReference type="Pfam" id="PF00528">
    <property type="entry name" value="BPD_transp_1"/>
    <property type="match status" value="1"/>
</dbReference>
<dbReference type="SUPFAM" id="SSF161098">
    <property type="entry name" value="MetI-like"/>
    <property type="match status" value="1"/>
</dbReference>
<dbReference type="PROSITE" id="PS50928">
    <property type="entry name" value="ABC_TM1"/>
    <property type="match status" value="1"/>
</dbReference>
<accession>Q4UKC4</accession>